<feature type="chain" id="PRO_0000195965" description="Histone H1.3">
    <location>
        <begin position="1"/>
        <end position="250"/>
    </location>
</feature>
<feature type="domain" description="H15" evidence="1">
    <location>
        <begin position="44"/>
        <end position="118"/>
    </location>
</feature>
<feature type="region of interest" description="Disordered" evidence="2">
    <location>
        <begin position="17"/>
        <end position="53"/>
    </location>
</feature>
<feature type="region of interest" description="Disordered" evidence="2">
    <location>
        <begin position="104"/>
        <end position="250"/>
    </location>
</feature>
<feature type="compositionally biased region" description="Low complexity" evidence="2">
    <location>
        <begin position="27"/>
        <end position="42"/>
    </location>
</feature>
<feature type="compositionally biased region" description="Basic and acidic residues" evidence="2">
    <location>
        <begin position="120"/>
        <end position="133"/>
    </location>
</feature>
<feature type="compositionally biased region" description="Low complexity" evidence="2">
    <location>
        <begin position="138"/>
        <end position="161"/>
    </location>
</feature>
<feature type="compositionally biased region" description="Basic and acidic residues" evidence="2">
    <location>
        <begin position="174"/>
        <end position="191"/>
    </location>
</feature>
<feature type="compositionally biased region" description="Low complexity" evidence="2">
    <location>
        <begin position="192"/>
        <end position="234"/>
    </location>
</feature>
<feature type="compositionally biased region" description="Basic residues" evidence="2">
    <location>
        <begin position="235"/>
        <end position="250"/>
    </location>
</feature>
<protein>
    <recommendedName>
        <fullName>Histone H1.3</fullName>
    </recommendedName>
</protein>
<keyword id="KW-0158">Chromosome</keyword>
<keyword id="KW-0238">DNA-binding</keyword>
<keyword id="KW-0539">Nucleus</keyword>
<comment type="function">
    <text>Histones H1 are necessary for the condensation of nucleosome chains into higher-order structures.</text>
</comment>
<comment type="subcellular location">
    <subcellularLocation>
        <location>Nucleus</location>
    </subcellularLocation>
    <subcellularLocation>
        <location>Chromosome</location>
    </subcellularLocation>
</comment>
<comment type="similarity">
    <text evidence="1">Belongs to the histone H1/H5 family.</text>
</comment>
<evidence type="ECO:0000255" key="1">
    <source>
        <dbReference type="PROSITE-ProRule" id="PRU00837"/>
    </source>
</evidence>
<evidence type="ECO:0000256" key="2">
    <source>
        <dbReference type="SAM" id="MobiDB-lite"/>
    </source>
</evidence>
<reference key="1">
    <citation type="journal article" date="2000" name="J. Mol. Evol.">
        <title>Histone H1 genes and histone gene clusters in the genus Drosophila.</title>
        <authorList>
            <person name="Nagel S."/>
            <person name="Grossbach U."/>
        </authorList>
    </citation>
    <scope>NUCLEOTIDE SEQUENCE [GENOMIC DNA]</scope>
    <source>
        <strain>Bochum</strain>
    </source>
</reference>
<reference key="2">
    <citation type="journal article" date="1998" name="Chromosoma">
        <title>Drosophila virilis has atypical kinds and arrangements of histone repeats.</title>
        <authorList>
            <person name="Schienman J.E."/>
            <person name="Lozovskaya E.R."/>
            <person name="Strausbaugh L.D."/>
        </authorList>
    </citation>
    <scope>DISCUSSION OF SEQUENCE</scope>
</reference>
<name>H13_DROVI</name>
<organism>
    <name type="scientific">Drosophila virilis</name>
    <name type="common">Fruit fly</name>
    <dbReference type="NCBI Taxonomy" id="7244"/>
    <lineage>
        <taxon>Eukaryota</taxon>
        <taxon>Metazoa</taxon>
        <taxon>Ecdysozoa</taxon>
        <taxon>Arthropoda</taxon>
        <taxon>Hexapoda</taxon>
        <taxon>Insecta</taxon>
        <taxon>Pterygota</taxon>
        <taxon>Neoptera</taxon>
        <taxon>Endopterygota</taxon>
        <taxon>Diptera</taxon>
        <taxon>Brachycera</taxon>
        <taxon>Muscomorpha</taxon>
        <taxon>Ephydroidea</taxon>
        <taxon>Drosophilidae</taxon>
        <taxon>Drosophila</taxon>
    </lineage>
</organism>
<proteinExistence type="inferred from homology"/>
<sequence>MSDSAVATSASPVIVQAASGEKKVSTKKAAATPKSKKSTAAPPSHPPTQQMVDASIKNLKERGGSSLLAIKKYIGATYKCDAQKLAPFIKKYLKNAVANGKLIQTKGKGASGSFKLSRSAKKDAKPKASAVEKKTKKVNASAAAATKRSSSTSTTKKAAGAADKKLSKSAAAKKNVEKKKADKEKAKDAKKTGTIKAKLTTAKAKSSATKPKTPKPKTTSAKPKKVVSATTPKKTAVKKPKAKTASATKK</sequence>
<gene>
    <name type="primary">His1.3</name>
    <name type="synonym">h1.3</name>
</gene>
<accession>Q94972</accession>
<dbReference type="EMBL" id="U67936">
    <property type="protein sequence ID" value="AAB07734.1"/>
    <property type="molecule type" value="Genomic_DNA"/>
</dbReference>
<dbReference type="SMR" id="Q94972"/>
<dbReference type="eggNOG" id="KOG4012">
    <property type="taxonomic scope" value="Eukaryota"/>
</dbReference>
<dbReference type="OrthoDB" id="8251629at2759"/>
<dbReference type="GO" id="GO:0000786">
    <property type="term" value="C:nucleosome"/>
    <property type="evidence" value="ECO:0007669"/>
    <property type="project" value="InterPro"/>
</dbReference>
<dbReference type="GO" id="GO:0005634">
    <property type="term" value="C:nucleus"/>
    <property type="evidence" value="ECO:0007669"/>
    <property type="project" value="UniProtKB-SubCell"/>
</dbReference>
<dbReference type="GO" id="GO:0003690">
    <property type="term" value="F:double-stranded DNA binding"/>
    <property type="evidence" value="ECO:0007669"/>
    <property type="project" value="TreeGrafter"/>
</dbReference>
<dbReference type="GO" id="GO:0031492">
    <property type="term" value="F:nucleosomal DNA binding"/>
    <property type="evidence" value="ECO:0007669"/>
    <property type="project" value="TreeGrafter"/>
</dbReference>
<dbReference type="GO" id="GO:0030527">
    <property type="term" value="F:structural constituent of chromatin"/>
    <property type="evidence" value="ECO:0007669"/>
    <property type="project" value="InterPro"/>
</dbReference>
<dbReference type="GO" id="GO:0030261">
    <property type="term" value="P:chromosome condensation"/>
    <property type="evidence" value="ECO:0007669"/>
    <property type="project" value="TreeGrafter"/>
</dbReference>
<dbReference type="GO" id="GO:0045910">
    <property type="term" value="P:negative regulation of DNA recombination"/>
    <property type="evidence" value="ECO:0007669"/>
    <property type="project" value="TreeGrafter"/>
</dbReference>
<dbReference type="GO" id="GO:0006334">
    <property type="term" value="P:nucleosome assembly"/>
    <property type="evidence" value="ECO:0007669"/>
    <property type="project" value="InterPro"/>
</dbReference>
<dbReference type="CDD" id="cd00073">
    <property type="entry name" value="H15"/>
    <property type="match status" value="1"/>
</dbReference>
<dbReference type="FunFam" id="1.10.10.10:FF:000140">
    <property type="entry name" value="Histone H1.0"/>
    <property type="match status" value="1"/>
</dbReference>
<dbReference type="Gene3D" id="1.10.10.10">
    <property type="entry name" value="Winged helix-like DNA-binding domain superfamily/Winged helix DNA-binding domain"/>
    <property type="match status" value="1"/>
</dbReference>
<dbReference type="InterPro" id="IPR005819">
    <property type="entry name" value="H1/H5"/>
</dbReference>
<dbReference type="InterPro" id="IPR005818">
    <property type="entry name" value="Histone_H1/H5_H15"/>
</dbReference>
<dbReference type="InterPro" id="IPR036388">
    <property type="entry name" value="WH-like_DNA-bd_sf"/>
</dbReference>
<dbReference type="InterPro" id="IPR036390">
    <property type="entry name" value="WH_DNA-bd_sf"/>
</dbReference>
<dbReference type="PANTHER" id="PTHR11467:SF20">
    <property type="entry name" value="H15 DOMAIN-CONTAINING PROTEIN-RELATED"/>
    <property type="match status" value="1"/>
</dbReference>
<dbReference type="PANTHER" id="PTHR11467">
    <property type="entry name" value="HISTONE H1"/>
    <property type="match status" value="1"/>
</dbReference>
<dbReference type="Pfam" id="PF00538">
    <property type="entry name" value="Linker_histone"/>
    <property type="match status" value="1"/>
</dbReference>
<dbReference type="PRINTS" id="PR00624">
    <property type="entry name" value="HISTONEH5"/>
</dbReference>
<dbReference type="SMART" id="SM00526">
    <property type="entry name" value="H15"/>
    <property type="match status" value="1"/>
</dbReference>
<dbReference type="SUPFAM" id="SSF46785">
    <property type="entry name" value="Winged helix' DNA-binding domain"/>
    <property type="match status" value="1"/>
</dbReference>
<dbReference type="PROSITE" id="PS51504">
    <property type="entry name" value="H15"/>
    <property type="match status" value="1"/>
</dbReference>